<accession>Q9ZCP9</accession>
<name>CSPA_RICPR</name>
<sequence length="70" mass="7785">MATNIVGKVKWYNSTKNFGFIEQDNGGKDVFVHKSAIDAAGLHSLEEGQEVIFDIEEKQGKAYAVNLRVK</sequence>
<reference key="1">
    <citation type="journal article" date="1998" name="Nature">
        <title>The genome sequence of Rickettsia prowazekii and the origin of mitochondria.</title>
        <authorList>
            <person name="Andersson S.G.E."/>
            <person name="Zomorodipour A."/>
            <person name="Andersson J.O."/>
            <person name="Sicheritz-Ponten T."/>
            <person name="Alsmark U.C.M."/>
            <person name="Podowski R.M."/>
            <person name="Naeslund A.K."/>
            <person name="Eriksson A.-S."/>
            <person name="Winkler H.H."/>
            <person name="Kurland C.G."/>
        </authorList>
    </citation>
    <scope>NUCLEOTIDE SEQUENCE [LARGE SCALE GENOMIC DNA]</scope>
    <source>
        <strain>Madrid E</strain>
    </source>
</reference>
<gene>
    <name type="primary">cspA</name>
    <name type="ordered locus">RP670</name>
</gene>
<organism>
    <name type="scientific">Rickettsia prowazekii (strain Madrid E)</name>
    <dbReference type="NCBI Taxonomy" id="272947"/>
    <lineage>
        <taxon>Bacteria</taxon>
        <taxon>Pseudomonadati</taxon>
        <taxon>Pseudomonadota</taxon>
        <taxon>Alphaproteobacteria</taxon>
        <taxon>Rickettsiales</taxon>
        <taxon>Rickettsiaceae</taxon>
        <taxon>Rickettsieae</taxon>
        <taxon>Rickettsia</taxon>
        <taxon>typhus group</taxon>
    </lineage>
</organism>
<proteinExistence type="inferred from homology"/>
<feature type="chain" id="PRO_0000100324" description="Cold shock-like protein CspA">
    <location>
        <begin position="1"/>
        <end position="70"/>
    </location>
</feature>
<feature type="domain" description="CSD">
    <location>
        <begin position="7"/>
        <end position="67"/>
    </location>
</feature>
<protein>
    <recommendedName>
        <fullName>Cold shock-like protein CspA</fullName>
    </recommendedName>
</protein>
<keyword id="KW-0010">Activator</keyword>
<keyword id="KW-0963">Cytoplasm</keyword>
<keyword id="KW-0238">DNA-binding</keyword>
<keyword id="KW-1185">Reference proteome</keyword>
<keyword id="KW-0804">Transcription</keyword>
<keyword id="KW-0805">Transcription regulation</keyword>
<comment type="subcellular location">
    <subcellularLocation>
        <location evidence="1">Cytoplasm</location>
    </subcellularLocation>
</comment>
<dbReference type="EMBL" id="AJ235272">
    <property type="protein sequence ID" value="CAA15108.1"/>
    <property type="molecule type" value="Genomic_DNA"/>
</dbReference>
<dbReference type="PIR" id="B71673">
    <property type="entry name" value="B71673"/>
</dbReference>
<dbReference type="RefSeq" id="NP_221032.1">
    <property type="nucleotide sequence ID" value="NC_000963.1"/>
</dbReference>
<dbReference type="RefSeq" id="WP_004596176.1">
    <property type="nucleotide sequence ID" value="NC_000963.1"/>
</dbReference>
<dbReference type="SMR" id="Q9ZCP9"/>
<dbReference type="STRING" id="272947.gene:17555747"/>
<dbReference type="EnsemblBacteria" id="CAA15108">
    <property type="protein sequence ID" value="CAA15108"/>
    <property type="gene ID" value="CAA15108"/>
</dbReference>
<dbReference type="KEGG" id="rpr:RP670"/>
<dbReference type="PATRIC" id="fig|272947.5.peg.690"/>
<dbReference type="eggNOG" id="COG1278">
    <property type="taxonomic scope" value="Bacteria"/>
</dbReference>
<dbReference type="HOGENOM" id="CLU_117621_4_1_5"/>
<dbReference type="OrthoDB" id="9801074at2"/>
<dbReference type="Proteomes" id="UP000002480">
    <property type="component" value="Chromosome"/>
</dbReference>
<dbReference type="GO" id="GO:0005829">
    <property type="term" value="C:cytosol"/>
    <property type="evidence" value="ECO:0007669"/>
    <property type="project" value="UniProtKB-ARBA"/>
</dbReference>
<dbReference type="GO" id="GO:0003677">
    <property type="term" value="F:DNA binding"/>
    <property type="evidence" value="ECO:0007669"/>
    <property type="project" value="UniProtKB-KW"/>
</dbReference>
<dbReference type="CDD" id="cd04458">
    <property type="entry name" value="CSP_CDS"/>
    <property type="match status" value="1"/>
</dbReference>
<dbReference type="Gene3D" id="2.40.50.140">
    <property type="entry name" value="Nucleic acid-binding proteins"/>
    <property type="match status" value="1"/>
</dbReference>
<dbReference type="InterPro" id="IPR012156">
    <property type="entry name" value="Cold_shock_CspA"/>
</dbReference>
<dbReference type="InterPro" id="IPR050181">
    <property type="entry name" value="Cold_shock_domain"/>
</dbReference>
<dbReference type="InterPro" id="IPR011129">
    <property type="entry name" value="CSD"/>
</dbReference>
<dbReference type="InterPro" id="IPR019844">
    <property type="entry name" value="CSD_CS"/>
</dbReference>
<dbReference type="InterPro" id="IPR002059">
    <property type="entry name" value="CSP_DNA-bd"/>
</dbReference>
<dbReference type="InterPro" id="IPR012340">
    <property type="entry name" value="NA-bd_OB-fold"/>
</dbReference>
<dbReference type="PANTHER" id="PTHR11544">
    <property type="entry name" value="COLD SHOCK DOMAIN CONTAINING PROTEINS"/>
    <property type="match status" value="1"/>
</dbReference>
<dbReference type="Pfam" id="PF00313">
    <property type="entry name" value="CSD"/>
    <property type="match status" value="1"/>
</dbReference>
<dbReference type="PIRSF" id="PIRSF002599">
    <property type="entry name" value="Cold_shock_A"/>
    <property type="match status" value="1"/>
</dbReference>
<dbReference type="PRINTS" id="PR00050">
    <property type="entry name" value="COLDSHOCK"/>
</dbReference>
<dbReference type="SMART" id="SM00357">
    <property type="entry name" value="CSP"/>
    <property type="match status" value="1"/>
</dbReference>
<dbReference type="SUPFAM" id="SSF50249">
    <property type="entry name" value="Nucleic acid-binding proteins"/>
    <property type="match status" value="1"/>
</dbReference>
<dbReference type="PROSITE" id="PS00352">
    <property type="entry name" value="CSD_1"/>
    <property type="match status" value="1"/>
</dbReference>
<dbReference type="PROSITE" id="PS51857">
    <property type="entry name" value="CSD_2"/>
    <property type="match status" value="1"/>
</dbReference>
<evidence type="ECO:0000250" key="1"/>